<accession>Q8ZVK6</accession>
<name>AGOG_PYRAE</name>
<organism>
    <name type="scientific">Pyrobaculum aerophilum (strain ATCC 51768 / DSM 7523 / JCM 9630 / CIP 104966 / NBRC 100827 / IM2)</name>
    <dbReference type="NCBI Taxonomy" id="178306"/>
    <lineage>
        <taxon>Archaea</taxon>
        <taxon>Thermoproteota</taxon>
        <taxon>Thermoprotei</taxon>
        <taxon>Thermoproteales</taxon>
        <taxon>Thermoproteaceae</taxon>
        <taxon>Pyrobaculum</taxon>
    </lineage>
</organism>
<protein>
    <recommendedName>
        <fullName>N-glycosylase/DNA lyase</fullName>
    </recommendedName>
    <alternativeName>
        <fullName>8-oxoguanine DNA glycosylase</fullName>
        <ecNumber>3.2.2.-</ecNumber>
    </alternativeName>
    <alternativeName>
        <fullName>AGOG</fullName>
    </alternativeName>
    <alternativeName>
        <fullName>DNA-(apurinic or apyrimidinic site) lyase</fullName>
        <shortName>AP lyase</shortName>
        <ecNumber>4.2.99.18</ecNumber>
    </alternativeName>
    <alternativeName>
        <fullName>Pa-AGOG</fullName>
    </alternativeName>
</protein>
<keyword id="KW-0002">3D-structure</keyword>
<keyword id="KW-0227">DNA damage</keyword>
<keyword id="KW-0228">DNA excision</keyword>
<keyword id="KW-0234">DNA repair</keyword>
<keyword id="KW-0378">Hydrolase</keyword>
<keyword id="KW-0456">Lyase</keyword>
<keyword id="KW-1185">Reference proteome</keyword>
<comment type="function">
    <text evidence="2">DNA repair enzyme that is part of the base excision repair (BER) pathway; protects from oxidative damage by removing the major product of DNA oxidation, 8-oxoguanine (GO), from single- and double-stranded DNA substrates.</text>
</comment>
<comment type="catalytic activity">
    <reaction evidence="2">
        <text>2'-deoxyribonucleotide-(2'-deoxyribose 5'-phosphate)-2'-deoxyribonucleotide-DNA = a 3'-end 2'-deoxyribonucleotide-(2,3-dehydro-2,3-deoxyribose 5'-phosphate)-DNA + a 5'-end 5'-phospho-2'-deoxyribonucleoside-DNA + H(+)</text>
        <dbReference type="Rhea" id="RHEA:66592"/>
        <dbReference type="Rhea" id="RHEA-COMP:13180"/>
        <dbReference type="Rhea" id="RHEA-COMP:16897"/>
        <dbReference type="Rhea" id="RHEA-COMP:17067"/>
        <dbReference type="ChEBI" id="CHEBI:15378"/>
        <dbReference type="ChEBI" id="CHEBI:136412"/>
        <dbReference type="ChEBI" id="CHEBI:157695"/>
        <dbReference type="ChEBI" id="CHEBI:167181"/>
        <dbReference type="EC" id="4.2.99.18"/>
    </reaction>
</comment>
<comment type="biophysicochemical properties">
    <temperatureDependence>
        <text evidence="2">Highly thermostable. No decrease in activity was observed after heating 15 minutes at 80 degrees Celsius.</text>
    </temperatureDependence>
</comment>
<comment type="domain">
    <text evidence="3">Contains two alpha-helical subdomains, with the 8-oxoguanine binding site located in a cleft at their interface. Contains a helix-hairpin-helix (HhH) structural motif and a Gly/Pro-rich sequence followed by a conserved Asp (HhH-GPD motif).</text>
</comment>
<comment type="similarity">
    <text evidence="4">Belongs to the archaeal N-glycosylase/DNA lyase (AGOG) family.</text>
</comment>
<proteinExistence type="evidence at protein level"/>
<evidence type="ECO:0000255" key="1"/>
<evidence type="ECO:0000269" key="2">
    <source>
    </source>
</evidence>
<evidence type="ECO:0000269" key="3">
    <source>
    </source>
</evidence>
<evidence type="ECO:0000305" key="4"/>
<evidence type="ECO:0007829" key="5">
    <source>
        <dbReference type="PDB" id="1XQO"/>
    </source>
</evidence>
<sequence length="256" mass="29467">MAAESQLKRVIETLRRLGIEEVLKLERRDPQYRAVCNVVKRHGETVGSRLAMLNALISYRLTGKGEEHWEYFGKYFSQLEVIDLCRDFLKYIETSPFLKIGVEARKKRALKACDYVPNLEDLGLTLRQLSHIVGARREQKTLVFTIKILNYAYMCSRGVNRVLPFDIPIPVDYRVARLTWCAGLIDFPPEEALRRYEAVQKIWDAVARETGIPPLHLDTLLWLAGRAVLYGENLHGVPKEVIALFQWRGGCRPPSE</sequence>
<reference key="1">
    <citation type="journal article" date="2002" name="Proc. Natl. Acad. Sci. U.S.A.">
        <title>Genome sequence of the hyperthermophilic crenarchaeon Pyrobaculum aerophilum.</title>
        <authorList>
            <person name="Fitz-Gibbon S.T."/>
            <person name="Ladner H."/>
            <person name="Kim U.-J."/>
            <person name="Stetter K.O."/>
            <person name="Simon M.I."/>
            <person name="Miller J.H."/>
        </authorList>
    </citation>
    <scope>NUCLEOTIDE SEQUENCE [LARGE SCALE GENOMIC DNA]</scope>
    <source>
        <strain>ATCC 51768 / DSM 7523 / JCM 9630 / CIP 104966 / NBRC 100827 / IM2</strain>
    </source>
</reference>
<reference key="2">
    <citation type="journal article" date="2004" name="Nucleic Acids Res.">
        <title>Pa-AGOG, the founding member of a new family of archaeal 8-oxoguanine DNA-glycosylases.</title>
        <authorList>
            <person name="Sartori A.A."/>
            <person name="Lingaraju G.M."/>
            <person name="Hunziker P."/>
            <person name="Winkler F.K."/>
            <person name="Jiricny J."/>
        </authorList>
    </citation>
    <scope>FUNCTION</scope>
    <scope>CATALYTIC ACTIVITY</scope>
    <scope>BIOPHYSICOCHEMICAL PROPERTIES</scope>
    <scope>MUTAGENESIS OF LYS-140; LYS-147; ASP-166 AND ASP-172</scope>
</reference>
<reference key="3">
    <citation type="journal article" date="2005" name="Structure">
        <title>A DNA glycosylase from Pyrobaculum aerophilum with an 8-oxoguanine binding mode and a noncanonical helix-hairpin-helix structure.</title>
        <authorList>
            <person name="Lingaraju G.M."/>
            <person name="Sartori A.A."/>
            <person name="Kostrewa D."/>
            <person name="Prota A.E."/>
            <person name="Jiricny J."/>
            <person name="Winkler F.K."/>
        </authorList>
    </citation>
    <scope>X-RAY CRYSTALLOGRAPHY (1.0 ANGSTROMS) OF APOENZYME AND IN COMPLEX WITH 8-OXOGUANOSINE</scope>
    <scope>DOMAIN</scope>
</reference>
<gene>
    <name type="ordered locus">PAE2237</name>
</gene>
<dbReference type="EC" id="3.2.2.-"/>
<dbReference type="EC" id="4.2.99.18"/>
<dbReference type="EMBL" id="AE009441">
    <property type="protein sequence ID" value="AAL64050.1"/>
    <property type="molecule type" value="Genomic_DNA"/>
</dbReference>
<dbReference type="RefSeq" id="WP_011008518.1">
    <property type="nucleotide sequence ID" value="NC_003364.1"/>
</dbReference>
<dbReference type="PDB" id="1XQO">
    <property type="method" value="X-ray"/>
    <property type="resolution" value="1.03 A"/>
    <property type="chains" value="A=1-256"/>
</dbReference>
<dbReference type="PDB" id="1XQP">
    <property type="method" value="X-ray"/>
    <property type="resolution" value="1.69 A"/>
    <property type="chains" value="A=1-256"/>
</dbReference>
<dbReference type="PDBsum" id="1XQO"/>
<dbReference type="PDBsum" id="1XQP"/>
<dbReference type="SMR" id="Q8ZVK6"/>
<dbReference type="STRING" id="178306.PAE2237"/>
<dbReference type="EnsemblBacteria" id="AAL64050">
    <property type="protein sequence ID" value="AAL64050"/>
    <property type="gene ID" value="PAE2237"/>
</dbReference>
<dbReference type="GeneID" id="1464384"/>
<dbReference type="KEGG" id="pai:PAE2237"/>
<dbReference type="PATRIC" id="fig|178306.9.peg.1663"/>
<dbReference type="eggNOG" id="arCOG04144">
    <property type="taxonomic scope" value="Archaea"/>
</dbReference>
<dbReference type="HOGENOM" id="CLU_085935_0_0_2"/>
<dbReference type="InParanoid" id="Q8ZVK6"/>
<dbReference type="BRENDA" id="3.2.2.B5">
    <property type="organism ID" value="5239"/>
</dbReference>
<dbReference type="BRENDA" id="4.2.99.18">
    <property type="organism ID" value="5239"/>
</dbReference>
<dbReference type="EvolutionaryTrace" id="Q8ZVK6"/>
<dbReference type="Proteomes" id="UP000002439">
    <property type="component" value="Chromosome"/>
</dbReference>
<dbReference type="GO" id="GO:0140078">
    <property type="term" value="F:class I DNA-(apurinic or apyrimidinic site) endonuclease activity"/>
    <property type="evidence" value="ECO:0007669"/>
    <property type="project" value="UniProtKB-EC"/>
</dbReference>
<dbReference type="GO" id="GO:0000702">
    <property type="term" value="F:oxidized base lesion DNA N-glycosylase activity"/>
    <property type="evidence" value="ECO:0007669"/>
    <property type="project" value="UniProtKB-UniRule"/>
</dbReference>
<dbReference type="GO" id="GO:0006284">
    <property type="term" value="P:base-excision repair"/>
    <property type="evidence" value="ECO:0007669"/>
    <property type="project" value="UniProtKB-UniRule"/>
</dbReference>
<dbReference type="Gene3D" id="1.10.1670.10">
    <property type="entry name" value="Helix-hairpin-Helix base-excision DNA repair enzymes (C-terminal)"/>
    <property type="match status" value="1"/>
</dbReference>
<dbReference type="Gene3D" id="1.10.340.30">
    <property type="entry name" value="Hypothetical protein, domain 2"/>
    <property type="match status" value="1"/>
</dbReference>
<dbReference type="HAMAP" id="MF_01168">
    <property type="entry name" value="AGOG"/>
    <property type="match status" value="1"/>
</dbReference>
<dbReference type="InterPro" id="IPR016544">
    <property type="entry name" value="AGOG"/>
</dbReference>
<dbReference type="InterPro" id="IPR015254">
    <property type="entry name" value="AGOG-like"/>
</dbReference>
<dbReference type="InterPro" id="IPR011257">
    <property type="entry name" value="DNA_glycosylase"/>
</dbReference>
<dbReference type="InterPro" id="IPR023170">
    <property type="entry name" value="HhH_base_excis_C"/>
</dbReference>
<dbReference type="Pfam" id="PF09171">
    <property type="entry name" value="AGOG"/>
    <property type="match status" value="1"/>
</dbReference>
<dbReference type="PIRSF" id="PIRSF008955">
    <property type="entry name" value="AGOG"/>
    <property type="match status" value="1"/>
</dbReference>
<dbReference type="SUPFAM" id="SSF48150">
    <property type="entry name" value="DNA-glycosylase"/>
    <property type="match status" value="1"/>
</dbReference>
<feature type="chain" id="PRO_0000185112" description="N-glycosylase/DNA lyase">
    <location>
        <begin position="1"/>
        <end position="256"/>
    </location>
</feature>
<feature type="region of interest" description="Helix-hairpin-helix">
    <location>
        <begin position="125"/>
        <end position="184"/>
    </location>
</feature>
<feature type="active site" description="Schiff-base intermediate with DNA">
    <location>
        <position position="140"/>
    </location>
</feature>
<feature type="active site" evidence="1">
    <location>
        <position position="172"/>
    </location>
</feature>
<feature type="binding site">
    <location>
        <position position="31"/>
    </location>
    <ligand>
        <name>8-oxoguanine</name>
        <dbReference type="ChEBI" id="CHEBI:52617"/>
    </ligand>
</feature>
<feature type="binding site">
    <location>
        <position position="58"/>
    </location>
    <ligand>
        <name>8-oxoguanine</name>
        <dbReference type="ChEBI" id="CHEBI:52617"/>
    </ligand>
</feature>
<feature type="binding site">
    <location>
        <position position="69"/>
    </location>
    <ligand>
        <name>8-oxoguanine</name>
        <dbReference type="ChEBI" id="CHEBI:52617"/>
    </ligand>
</feature>
<feature type="binding site" evidence="1">
    <location>
        <position position="144"/>
    </location>
    <ligand>
        <name>8-oxoguanine</name>
        <dbReference type="ChEBI" id="CHEBI:52617"/>
    </ligand>
</feature>
<feature type="binding site">
    <location>
        <position position="170"/>
    </location>
    <ligand>
        <name>8-oxoguanine</name>
        <dbReference type="ChEBI" id="CHEBI:52617"/>
    </ligand>
</feature>
<feature type="binding site">
    <location>
        <position position="218"/>
    </location>
    <ligand>
        <name>8-oxoguanine</name>
        <dbReference type="ChEBI" id="CHEBI:52617"/>
    </ligand>
</feature>
<feature type="binding site">
    <location>
        <position position="222"/>
    </location>
    <ligand>
        <name>8-oxoguanine</name>
        <dbReference type="ChEBI" id="CHEBI:52617"/>
    </ligand>
</feature>
<feature type="mutagenesis site" description="Loss of activity." evidence="2">
    <original>K</original>
    <variation>Q</variation>
    <location>
        <position position="140"/>
    </location>
</feature>
<feature type="mutagenesis site" description="Great decrease in activity and thermostability." evidence="2">
    <original>K</original>
    <variation>Q</variation>
    <location>
        <position position="147"/>
    </location>
</feature>
<feature type="mutagenesis site" description="No effect." evidence="2">
    <original>D</original>
    <variation>N</variation>
    <location>
        <position position="166"/>
    </location>
</feature>
<feature type="mutagenesis site" description="Loss of activity." evidence="2">
    <original>D</original>
    <variation>N</variation>
    <location>
        <position position="172"/>
    </location>
</feature>
<feature type="helix" evidence="5">
    <location>
        <begin position="3"/>
        <end position="14"/>
    </location>
</feature>
<feature type="helix" evidence="5">
    <location>
        <begin position="19"/>
        <end position="26"/>
    </location>
</feature>
<feature type="helix" evidence="5">
    <location>
        <begin position="30"/>
        <end position="42"/>
    </location>
</feature>
<feature type="helix" evidence="5">
    <location>
        <begin position="44"/>
        <end position="56"/>
    </location>
</feature>
<feature type="helix" evidence="5">
    <location>
        <begin position="65"/>
        <end position="77"/>
    </location>
</feature>
<feature type="helix" evidence="5">
    <location>
        <begin position="84"/>
        <end position="94"/>
    </location>
</feature>
<feature type="helix" evidence="5">
    <location>
        <begin position="102"/>
        <end position="112"/>
    </location>
</feature>
<feature type="helix" evidence="5">
    <location>
        <begin position="122"/>
        <end position="133"/>
    </location>
</feature>
<feature type="helix" evidence="5">
    <location>
        <begin position="140"/>
        <end position="157"/>
    </location>
</feature>
<feature type="helix" evidence="5">
    <location>
        <begin position="173"/>
        <end position="181"/>
    </location>
</feature>
<feature type="helix" evidence="5">
    <location>
        <begin position="189"/>
        <end position="194"/>
    </location>
</feature>
<feature type="helix" evidence="5">
    <location>
        <begin position="196"/>
        <end position="210"/>
    </location>
</feature>
<feature type="helix" evidence="5">
    <location>
        <begin position="214"/>
        <end position="228"/>
    </location>
</feature>
<feature type="strand" evidence="5">
    <location>
        <begin position="235"/>
        <end position="237"/>
    </location>
</feature>
<feature type="helix" evidence="5">
    <location>
        <begin position="239"/>
        <end position="244"/>
    </location>
</feature>